<feature type="chain" id="PRO_0000073222" description="ATP synthase gamma chain">
    <location>
        <begin position="1"/>
        <end position="289"/>
    </location>
</feature>
<accession>Q5P4E3</accession>
<comment type="function">
    <text evidence="1">Produces ATP from ADP in the presence of a proton gradient across the membrane. The gamma chain is believed to be important in regulating ATPase activity and the flow of protons through the CF(0) complex.</text>
</comment>
<comment type="subunit">
    <text evidence="1">F-type ATPases have 2 components, CF(1) - the catalytic core - and CF(0) - the membrane proton channel. CF(1) has five subunits: alpha(3), beta(3), gamma(1), delta(1), epsilon(1). CF(0) has three main subunits: a, b and c.</text>
</comment>
<comment type="subcellular location">
    <subcellularLocation>
        <location evidence="1">Cell inner membrane</location>
        <topology evidence="1">Peripheral membrane protein</topology>
    </subcellularLocation>
</comment>
<comment type="similarity">
    <text evidence="1">Belongs to the ATPase gamma chain family.</text>
</comment>
<protein>
    <recommendedName>
        <fullName evidence="1">ATP synthase gamma chain</fullName>
    </recommendedName>
    <alternativeName>
        <fullName evidence="1">ATP synthase F1 sector gamma subunit</fullName>
    </alternativeName>
    <alternativeName>
        <fullName evidence="1">F-ATPase gamma subunit</fullName>
    </alternativeName>
</protein>
<evidence type="ECO:0000255" key="1">
    <source>
        <dbReference type="HAMAP-Rule" id="MF_00815"/>
    </source>
</evidence>
<gene>
    <name evidence="1" type="primary">atpG</name>
    <name type="ordered locus">AZOSEA16950</name>
    <name type="ORF">ebA3006</name>
</gene>
<keyword id="KW-0066">ATP synthesis</keyword>
<keyword id="KW-0997">Cell inner membrane</keyword>
<keyword id="KW-1003">Cell membrane</keyword>
<keyword id="KW-0139">CF(1)</keyword>
<keyword id="KW-0375">Hydrogen ion transport</keyword>
<keyword id="KW-0406">Ion transport</keyword>
<keyword id="KW-0472">Membrane</keyword>
<keyword id="KW-1185">Reference proteome</keyword>
<keyword id="KW-0813">Transport</keyword>
<name>ATPG_AROAE</name>
<dbReference type="EMBL" id="CR555306">
    <property type="protein sequence ID" value="CAI07820.1"/>
    <property type="molecule type" value="Genomic_DNA"/>
</dbReference>
<dbReference type="RefSeq" id="WP_011237534.1">
    <property type="nucleotide sequence ID" value="NC_006513.1"/>
</dbReference>
<dbReference type="SMR" id="Q5P4E3"/>
<dbReference type="STRING" id="76114.ebA3006"/>
<dbReference type="KEGG" id="eba:ebA3006"/>
<dbReference type="eggNOG" id="COG0224">
    <property type="taxonomic scope" value="Bacteria"/>
</dbReference>
<dbReference type="HOGENOM" id="CLU_050669_0_1_4"/>
<dbReference type="OrthoDB" id="9812769at2"/>
<dbReference type="Proteomes" id="UP000006552">
    <property type="component" value="Chromosome"/>
</dbReference>
<dbReference type="GO" id="GO:0005886">
    <property type="term" value="C:plasma membrane"/>
    <property type="evidence" value="ECO:0007669"/>
    <property type="project" value="UniProtKB-SubCell"/>
</dbReference>
<dbReference type="GO" id="GO:0045259">
    <property type="term" value="C:proton-transporting ATP synthase complex"/>
    <property type="evidence" value="ECO:0007669"/>
    <property type="project" value="UniProtKB-KW"/>
</dbReference>
<dbReference type="GO" id="GO:0005524">
    <property type="term" value="F:ATP binding"/>
    <property type="evidence" value="ECO:0007669"/>
    <property type="project" value="UniProtKB-UniRule"/>
</dbReference>
<dbReference type="GO" id="GO:0046933">
    <property type="term" value="F:proton-transporting ATP synthase activity, rotational mechanism"/>
    <property type="evidence" value="ECO:0007669"/>
    <property type="project" value="UniProtKB-UniRule"/>
</dbReference>
<dbReference type="GO" id="GO:0042777">
    <property type="term" value="P:proton motive force-driven plasma membrane ATP synthesis"/>
    <property type="evidence" value="ECO:0007669"/>
    <property type="project" value="UniProtKB-UniRule"/>
</dbReference>
<dbReference type="CDD" id="cd12151">
    <property type="entry name" value="F1-ATPase_gamma"/>
    <property type="match status" value="1"/>
</dbReference>
<dbReference type="FunFam" id="1.10.287.80:FF:000005">
    <property type="entry name" value="ATP synthase gamma chain"/>
    <property type="match status" value="1"/>
</dbReference>
<dbReference type="Gene3D" id="3.40.1380.10">
    <property type="match status" value="1"/>
</dbReference>
<dbReference type="Gene3D" id="1.10.287.80">
    <property type="entry name" value="ATP synthase, gamma subunit, helix hairpin domain"/>
    <property type="match status" value="1"/>
</dbReference>
<dbReference type="HAMAP" id="MF_00815">
    <property type="entry name" value="ATP_synth_gamma_bact"/>
    <property type="match status" value="1"/>
</dbReference>
<dbReference type="InterPro" id="IPR035968">
    <property type="entry name" value="ATP_synth_F1_ATPase_gsu"/>
</dbReference>
<dbReference type="InterPro" id="IPR000131">
    <property type="entry name" value="ATP_synth_F1_gsu"/>
</dbReference>
<dbReference type="InterPro" id="IPR023632">
    <property type="entry name" value="ATP_synth_F1_gsu_CS"/>
</dbReference>
<dbReference type="NCBIfam" id="TIGR01146">
    <property type="entry name" value="ATPsyn_F1gamma"/>
    <property type="match status" value="1"/>
</dbReference>
<dbReference type="NCBIfam" id="NF004144">
    <property type="entry name" value="PRK05621.1-1"/>
    <property type="match status" value="1"/>
</dbReference>
<dbReference type="PANTHER" id="PTHR11693">
    <property type="entry name" value="ATP SYNTHASE GAMMA CHAIN"/>
    <property type="match status" value="1"/>
</dbReference>
<dbReference type="PANTHER" id="PTHR11693:SF22">
    <property type="entry name" value="ATP SYNTHASE SUBUNIT GAMMA, MITOCHONDRIAL"/>
    <property type="match status" value="1"/>
</dbReference>
<dbReference type="Pfam" id="PF00231">
    <property type="entry name" value="ATP-synt"/>
    <property type="match status" value="1"/>
</dbReference>
<dbReference type="PRINTS" id="PR00126">
    <property type="entry name" value="ATPASEGAMMA"/>
</dbReference>
<dbReference type="SUPFAM" id="SSF52943">
    <property type="entry name" value="ATP synthase (F1-ATPase), gamma subunit"/>
    <property type="match status" value="1"/>
</dbReference>
<dbReference type="PROSITE" id="PS00153">
    <property type="entry name" value="ATPASE_GAMMA"/>
    <property type="match status" value="1"/>
</dbReference>
<organism>
    <name type="scientific">Aromatoleum aromaticum (strain DSM 19018 / LMG 30748 / EbN1)</name>
    <name type="common">Azoarcus sp. (strain EbN1)</name>
    <dbReference type="NCBI Taxonomy" id="76114"/>
    <lineage>
        <taxon>Bacteria</taxon>
        <taxon>Pseudomonadati</taxon>
        <taxon>Pseudomonadota</taxon>
        <taxon>Betaproteobacteria</taxon>
        <taxon>Rhodocyclales</taxon>
        <taxon>Rhodocyclaceae</taxon>
        <taxon>Aromatoleum</taxon>
    </lineage>
</organism>
<proteinExistence type="inferred from homology"/>
<reference key="1">
    <citation type="journal article" date="2005" name="Arch. Microbiol.">
        <title>The genome sequence of an anaerobic aromatic-degrading denitrifying bacterium, strain EbN1.</title>
        <authorList>
            <person name="Rabus R."/>
            <person name="Kube M."/>
            <person name="Heider J."/>
            <person name="Beck A."/>
            <person name="Heitmann K."/>
            <person name="Widdel F."/>
            <person name="Reinhardt R."/>
        </authorList>
    </citation>
    <scope>NUCLEOTIDE SEQUENCE [LARGE SCALE GENOMIC DNA]</scope>
    <source>
        <strain>DSM 19018 / LMG 30748 / EbN1</strain>
    </source>
</reference>
<sequence length="289" mass="31859">MASGKEIRTKIKSVQNTRKITKAMEMVAASKMRKAQDRMRAARPYAEKIRRLAANLSQANVTDYKHAFLVQKDEVKRVGLILVTTDKGLCGGLNTNIQRVALNAMKGWDASGTTEIQACCIGNKGFGFMQRMGAKVVSHVVQLGDTPHLEKMIGPVKIMLDAFQNGELDAVYVAYTRFINTMKQEPVLEQLLPLTGEKLGTPEGSWDYLYEPDPQVVIDEMLVRYVEALVYQAVAENMASEQSARMVAMKAASDNAKNVIGELQLVYNKTRQAAITKELSEIVSGAAAV</sequence>